<organism>
    <name type="scientific">Pseudomonas syringae pv. syringae (strain B728a)</name>
    <dbReference type="NCBI Taxonomy" id="205918"/>
    <lineage>
        <taxon>Bacteria</taxon>
        <taxon>Pseudomonadati</taxon>
        <taxon>Pseudomonadota</taxon>
        <taxon>Gammaproteobacteria</taxon>
        <taxon>Pseudomonadales</taxon>
        <taxon>Pseudomonadaceae</taxon>
        <taxon>Pseudomonas</taxon>
        <taxon>Pseudomonas syringae</taxon>
    </lineage>
</organism>
<dbReference type="EMBL" id="CP000075">
    <property type="protein sequence ID" value="AAY39573.1"/>
    <property type="molecule type" value="Genomic_DNA"/>
</dbReference>
<dbReference type="RefSeq" id="WP_002555485.1">
    <property type="nucleotide sequence ID" value="NC_007005.1"/>
</dbReference>
<dbReference type="RefSeq" id="YP_237611.1">
    <property type="nucleotide sequence ID" value="NC_007005.1"/>
</dbReference>
<dbReference type="SMR" id="Q4ZMP9"/>
<dbReference type="STRING" id="205918.Psyr_4543"/>
<dbReference type="GeneID" id="96221025"/>
<dbReference type="KEGG" id="psb:Psyr_4543"/>
<dbReference type="PATRIC" id="fig|205918.7.peg.4682"/>
<dbReference type="eggNOG" id="COG0091">
    <property type="taxonomic scope" value="Bacteria"/>
</dbReference>
<dbReference type="HOGENOM" id="CLU_083987_3_3_6"/>
<dbReference type="OrthoDB" id="9805969at2"/>
<dbReference type="Proteomes" id="UP000000426">
    <property type="component" value="Chromosome"/>
</dbReference>
<dbReference type="GO" id="GO:0022625">
    <property type="term" value="C:cytosolic large ribosomal subunit"/>
    <property type="evidence" value="ECO:0007669"/>
    <property type="project" value="TreeGrafter"/>
</dbReference>
<dbReference type="GO" id="GO:0019843">
    <property type="term" value="F:rRNA binding"/>
    <property type="evidence" value="ECO:0007669"/>
    <property type="project" value="UniProtKB-UniRule"/>
</dbReference>
<dbReference type="GO" id="GO:0003735">
    <property type="term" value="F:structural constituent of ribosome"/>
    <property type="evidence" value="ECO:0007669"/>
    <property type="project" value="InterPro"/>
</dbReference>
<dbReference type="GO" id="GO:0006412">
    <property type="term" value="P:translation"/>
    <property type="evidence" value="ECO:0007669"/>
    <property type="project" value="UniProtKB-UniRule"/>
</dbReference>
<dbReference type="CDD" id="cd00336">
    <property type="entry name" value="Ribosomal_L22"/>
    <property type="match status" value="1"/>
</dbReference>
<dbReference type="FunFam" id="3.90.470.10:FF:000001">
    <property type="entry name" value="50S ribosomal protein L22"/>
    <property type="match status" value="1"/>
</dbReference>
<dbReference type="Gene3D" id="3.90.470.10">
    <property type="entry name" value="Ribosomal protein L22/L17"/>
    <property type="match status" value="1"/>
</dbReference>
<dbReference type="HAMAP" id="MF_01331_B">
    <property type="entry name" value="Ribosomal_uL22_B"/>
    <property type="match status" value="1"/>
</dbReference>
<dbReference type="InterPro" id="IPR001063">
    <property type="entry name" value="Ribosomal_uL22"/>
</dbReference>
<dbReference type="InterPro" id="IPR005727">
    <property type="entry name" value="Ribosomal_uL22_bac/chlpt-type"/>
</dbReference>
<dbReference type="InterPro" id="IPR047867">
    <property type="entry name" value="Ribosomal_uL22_bac/org-type"/>
</dbReference>
<dbReference type="InterPro" id="IPR018260">
    <property type="entry name" value="Ribosomal_uL22_CS"/>
</dbReference>
<dbReference type="InterPro" id="IPR036394">
    <property type="entry name" value="Ribosomal_uL22_sf"/>
</dbReference>
<dbReference type="NCBIfam" id="TIGR01044">
    <property type="entry name" value="rplV_bact"/>
    <property type="match status" value="1"/>
</dbReference>
<dbReference type="PANTHER" id="PTHR13501">
    <property type="entry name" value="CHLOROPLAST 50S RIBOSOMAL PROTEIN L22-RELATED"/>
    <property type="match status" value="1"/>
</dbReference>
<dbReference type="PANTHER" id="PTHR13501:SF8">
    <property type="entry name" value="LARGE RIBOSOMAL SUBUNIT PROTEIN UL22M"/>
    <property type="match status" value="1"/>
</dbReference>
<dbReference type="Pfam" id="PF00237">
    <property type="entry name" value="Ribosomal_L22"/>
    <property type="match status" value="1"/>
</dbReference>
<dbReference type="SUPFAM" id="SSF54843">
    <property type="entry name" value="Ribosomal protein L22"/>
    <property type="match status" value="1"/>
</dbReference>
<dbReference type="PROSITE" id="PS00464">
    <property type="entry name" value="RIBOSOMAL_L22"/>
    <property type="match status" value="1"/>
</dbReference>
<proteinExistence type="inferred from homology"/>
<name>RL22_PSEU2</name>
<reference key="1">
    <citation type="journal article" date="2005" name="Proc. Natl. Acad. Sci. U.S.A.">
        <title>Comparison of the complete genome sequences of Pseudomonas syringae pv. syringae B728a and pv. tomato DC3000.</title>
        <authorList>
            <person name="Feil H."/>
            <person name="Feil W.S."/>
            <person name="Chain P."/>
            <person name="Larimer F."/>
            <person name="Dibartolo G."/>
            <person name="Copeland A."/>
            <person name="Lykidis A."/>
            <person name="Trong S."/>
            <person name="Nolan M."/>
            <person name="Goltsman E."/>
            <person name="Thiel J."/>
            <person name="Malfatti S."/>
            <person name="Loper J.E."/>
            <person name="Lapidus A."/>
            <person name="Detter J.C."/>
            <person name="Land M."/>
            <person name="Richardson P.M."/>
            <person name="Kyrpides N.C."/>
            <person name="Ivanova N."/>
            <person name="Lindow S.E."/>
        </authorList>
    </citation>
    <scope>NUCLEOTIDE SEQUENCE [LARGE SCALE GENOMIC DNA]</scope>
    <source>
        <strain>B728a</strain>
    </source>
</reference>
<comment type="function">
    <text evidence="1">This protein binds specifically to 23S rRNA; its binding is stimulated by other ribosomal proteins, e.g. L4, L17, and L20. It is important during the early stages of 50S assembly. It makes multiple contacts with different domains of the 23S rRNA in the assembled 50S subunit and ribosome (By similarity).</text>
</comment>
<comment type="function">
    <text evidence="1">The globular domain of the protein is located near the polypeptide exit tunnel on the outside of the subunit, while an extended beta-hairpin is found that lines the wall of the exit tunnel in the center of the 70S ribosome.</text>
</comment>
<comment type="subunit">
    <text evidence="1">Part of the 50S ribosomal subunit.</text>
</comment>
<comment type="similarity">
    <text evidence="1">Belongs to the universal ribosomal protein uL22 family.</text>
</comment>
<gene>
    <name evidence="1" type="primary">rplV</name>
    <name type="ordered locus">Psyr_4543</name>
</gene>
<evidence type="ECO:0000255" key="1">
    <source>
        <dbReference type="HAMAP-Rule" id="MF_01331"/>
    </source>
</evidence>
<evidence type="ECO:0000305" key="2"/>
<sequence length="110" mass="11893">MEVAAKLSGARISAQKARLVADQIRGKKVGEALNLLAFSSKKAAEILKKVLESAVANAEHNEGADVDDLKVSTVFVNEGRSLKRIMPRAKGRADRIVKRSCHITVKVADK</sequence>
<protein>
    <recommendedName>
        <fullName evidence="1">Large ribosomal subunit protein uL22</fullName>
    </recommendedName>
    <alternativeName>
        <fullName evidence="2">50S ribosomal protein L22</fullName>
    </alternativeName>
</protein>
<accession>Q4ZMP9</accession>
<feature type="chain" id="PRO_0000243188" description="Large ribosomal subunit protein uL22">
    <location>
        <begin position="1"/>
        <end position="110"/>
    </location>
</feature>
<keyword id="KW-0687">Ribonucleoprotein</keyword>
<keyword id="KW-0689">Ribosomal protein</keyword>
<keyword id="KW-0694">RNA-binding</keyword>
<keyword id="KW-0699">rRNA-binding</keyword>